<accession>B7T7N1</accession>
<proteinExistence type="evidence at protein level"/>
<name>MFP2_ACRMI</name>
<comment type="subcellular location">
    <subcellularLocation>
        <location evidence="4">Secreted</location>
    </subcellularLocation>
</comment>
<comment type="tissue specificity">
    <text evidence="1">Component of the acid-insoluble and acid-soluble organic matrix of the aragonitic skeleton (at protein level).</text>
</comment>
<organism>
    <name type="scientific">Acropora millepora</name>
    <name type="common">Staghorn coral</name>
    <name type="synonym">Heteropora millepora</name>
    <dbReference type="NCBI Taxonomy" id="45264"/>
    <lineage>
        <taxon>Eukaryota</taxon>
        <taxon>Metazoa</taxon>
        <taxon>Cnidaria</taxon>
        <taxon>Anthozoa</taxon>
        <taxon>Hexacorallia</taxon>
        <taxon>Scleractinia</taxon>
        <taxon>Astrocoeniina</taxon>
        <taxon>Acroporidae</taxon>
        <taxon>Acropora</taxon>
    </lineage>
</organism>
<protein>
    <recommendedName>
        <fullName evidence="2">MAM and fibronectin type III domain-containing protein 2</fullName>
    </recommendedName>
</protein>
<dbReference type="EMBL" id="JT016410">
    <property type="status" value="NOT_ANNOTATED_CDS"/>
    <property type="molecule type" value="mRNA"/>
</dbReference>
<dbReference type="OrthoDB" id="5958853at2759"/>
<dbReference type="GO" id="GO:0005576">
    <property type="term" value="C:extracellular region"/>
    <property type="evidence" value="ECO:0007669"/>
    <property type="project" value="UniProtKB-SubCell"/>
</dbReference>
<reference evidence="3" key="1">
    <citation type="journal article" date="2012" name="Mol. Ecol.">
        <title>Whole transcriptome analysis of the coral Acropora millepora reveals complex responses to CO(2)-driven acidification during the initiation of calcification.</title>
        <authorList>
            <person name="Moya A."/>
            <person name="Huisman L."/>
            <person name="Ball E.E."/>
            <person name="Hayward D.C."/>
            <person name="Grasso L.C."/>
            <person name="Chua C.M."/>
            <person name="Woo H.N."/>
            <person name="Gattuso J.P."/>
            <person name="Foret S."/>
            <person name="Miller D.J."/>
        </authorList>
    </citation>
    <scope>NUCLEOTIDE SEQUENCE [MRNA]</scope>
</reference>
<reference evidence="3" key="2">
    <citation type="journal article" date="2013" name="Mol. Biol. Evol.">
        <title>The skeletal proteome of the coral Acropora millepora: the evolution of calcification by co-option and domain shuffling.</title>
        <authorList>
            <person name="Ramos-Silva P."/>
            <person name="Kaandorp J."/>
            <person name="Huisman L."/>
            <person name="Marie B."/>
            <person name="Zanella-Cleon I."/>
            <person name="Guichard N."/>
            <person name="Miller D.J."/>
            <person name="Marin F."/>
        </authorList>
    </citation>
    <scope>PROTEIN SEQUENCE OF 1-33 AND 36-49</scope>
    <scope>TISSUE SPECIFICITY</scope>
    <scope>IDENTIFICATION BY MASS SPECTROMETRY</scope>
</reference>
<keyword id="KW-0903">Direct protein sequencing</keyword>
<keyword id="KW-0964">Secreted</keyword>
<evidence type="ECO:0000269" key="1">
    <source>
    </source>
</evidence>
<evidence type="ECO:0000303" key="2">
    <source>
    </source>
</evidence>
<evidence type="ECO:0000305" key="3"/>
<evidence type="ECO:0000305" key="4">
    <source>
    </source>
</evidence>
<feature type="chain" id="PRO_0000429548" description="MAM and fibronectin type III domain-containing protein 2">
    <location>
        <begin position="1" status="less than"/>
        <end position="112" status="greater than"/>
    </location>
</feature>
<feature type="non-terminal residue" evidence="3">
    <location>
        <position position="1"/>
    </location>
</feature>
<feature type="non-terminal residue" evidence="3">
    <location>
        <position position="112"/>
    </location>
</feature>
<sequence>FSPDCTWTIRNSGISQPVAIVSIEEVQFGYCRGYIKVFDGSGAQIFTREGCHENHSSNAFLEIAFQESQNVTIQVSLQNNQSYARVGYGILEDDLESASLLPAWNVAIENKT</sequence>